<feature type="chain" id="PRO_0000321433" description="Argininosuccinate lyase">
    <location>
        <begin position="1"/>
        <end position="466"/>
    </location>
</feature>
<name>ARLY_CAMC1</name>
<comment type="catalytic activity">
    <reaction evidence="1">
        <text>2-(N(omega)-L-arginino)succinate = fumarate + L-arginine</text>
        <dbReference type="Rhea" id="RHEA:24020"/>
        <dbReference type="ChEBI" id="CHEBI:29806"/>
        <dbReference type="ChEBI" id="CHEBI:32682"/>
        <dbReference type="ChEBI" id="CHEBI:57472"/>
        <dbReference type="EC" id="4.3.2.1"/>
    </reaction>
</comment>
<comment type="pathway">
    <text evidence="1">Amino-acid biosynthesis; L-arginine biosynthesis; L-arginine from L-ornithine and carbamoyl phosphate: step 3/3.</text>
</comment>
<comment type="subcellular location">
    <subcellularLocation>
        <location evidence="1">Cytoplasm</location>
    </subcellularLocation>
</comment>
<comment type="similarity">
    <text evidence="1">Belongs to the lyase 1 family. Argininosuccinate lyase subfamily.</text>
</comment>
<accession>A7ZC90</accession>
<reference key="1">
    <citation type="submission" date="2007-10" db="EMBL/GenBank/DDBJ databases">
        <title>Genome sequence of Campylobacter concisus 13826 isolated from human feces.</title>
        <authorList>
            <person name="Fouts D.E."/>
            <person name="Mongodin E.F."/>
            <person name="Puiu D."/>
            <person name="Sebastian Y."/>
            <person name="Miller W.G."/>
            <person name="Mandrell R.E."/>
            <person name="On S."/>
            <person name="Nelson K.E."/>
        </authorList>
    </citation>
    <scope>NUCLEOTIDE SEQUENCE [LARGE SCALE GENOMIC DNA]</scope>
    <source>
        <strain>13826</strain>
    </source>
</reference>
<protein>
    <recommendedName>
        <fullName evidence="1">Argininosuccinate lyase</fullName>
        <shortName evidence="1">ASAL</shortName>
        <ecNumber evidence="1">4.3.2.1</ecNumber>
    </recommendedName>
    <alternativeName>
        <fullName evidence="1">Arginosuccinase</fullName>
    </alternativeName>
</protein>
<gene>
    <name evidence="1" type="primary">argH</name>
    <name type="ordered locus">Ccon26_04990</name>
    <name type="ORF">CCC13826_1520</name>
</gene>
<evidence type="ECO:0000255" key="1">
    <source>
        <dbReference type="HAMAP-Rule" id="MF_00006"/>
    </source>
</evidence>
<keyword id="KW-0028">Amino-acid biosynthesis</keyword>
<keyword id="KW-0055">Arginine biosynthesis</keyword>
<keyword id="KW-0963">Cytoplasm</keyword>
<keyword id="KW-0456">Lyase</keyword>
<sequence length="466" mass="51970">MKKNENAHKKMWEGRFSEASSKLLEEFNASINFDKNLFEEDIAGSKAHAKMLGICGILKKDESEAIIKGLDEVLAEIRAGKFAFKIEDEDIHMAVEKRLSQIIGAELGGRLHTARSRNDQVALDFKFYVLKKNLEISSLIKELIATLTNLAKNHKDTLMPGYTHFQHAQPVSLSYHLLAYAFMFKRDFERFVSSYERNNLSPLGSAALAGTPHKIDRSIVASELGFADCTQNAMDSVSDRDYALEILFNISVFMTHASRLCEELILWSSQEFGFVSISDAYSTGSSIMPQKKNPDVAELIRGKTGRVNGNLVALLTTMKGLPLAYNKDMQEDKEGVFDSVATILSSATILNEMIKTAKFNEKNMLKATKTGHLSATDLADYLVREKNIPFRTAHFITGKAVAKAESLGLDLSELNKEQLKSVDENLDENAIKFLDLHASKEARTSKGGTANKSVEEQIQILDDWLK</sequence>
<proteinExistence type="inferred from homology"/>
<dbReference type="EC" id="4.3.2.1" evidence="1"/>
<dbReference type="EMBL" id="CP000792">
    <property type="protein sequence ID" value="EAT99013.1"/>
    <property type="molecule type" value="Genomic_DNA"/>
</dbReference>
<dbReference type="RefSeq" id="WP_012001375.1">
    <property type="nucleotide sequence ID" value="NC_009802.2"/>
</dbReference>
<dbReference type="SMR" id="A7ZC90"/>
<dbReference type="STRING" id="360104.CCC13826_1520"/>
<dbReference type="KEGG" id="cco:CCC13826_1520"/>
<dbReference type="eggNOG" id="COG0165">
    <property type="taxonomic scope" value="Bacteria"/>
</dbReference>
<dbReference type="HOGENOM" id="CLU_027272_2_3_7"/>
<dbReference type="OrthoDB" id="9769623at2"/>
<dbReference type="UniPathway" id="UPA00068">
    <property type="reaction ID" value="UER00114"/>
</dbReference>
<dbReference type="Proteomes" id="UP000001121">
    <property type="component" value="Chromosome"/>
</dbReference>
<dbReference type="GO" id="GO:0005829">
    <property type="term" value="C:cytosol"/>
    <property type="evidence" value="ECO:0007669"/>
    <property type="project" value="TreeGrafter"/>
</dbReference>
<dbReference type="GO" id="GO:0004056">
    <property type="term" value="F:argininosuccinate lyase activity"/>
    <property type="evidence" value="ECO:0007669"/>
    <property type="project" value="UniProtKB-UniRule"/>
</dbReference>
<dbReference type="GO" id="GO:0042450">
    <property type="term" value="P:arginine biosynthetic process via ornithine"/>
    <property type="evidence" value="ECO:0007669"/>
    <property type="project" value="InterPro"/>
</dbReference>
<dbReference type="GO" id="GO:0006526">
    <property type="term" value="P:L-arginine biosynthetic process"/>
    <property type="evidence" value="ECO:0007669"/>
    <property type="project" value="UniProtKB-UniRule"/>
</dbReference>
<dbReference type="CDD" id="cd01359">
    <property type="entry name" value="Argininosuccinate_lyase"/>
    <property type="match status" value="1"/>
</dbReference>
<dbReference type="FunFam" id="1.10.275.10:FF:000002">
    <property type="entry name" value="Argininosuccinate lyase"/>
    <property type="match status" value="1"/>
</dbReference>
<dbReference type="FunFam" id="1.10.40.30:FF:000001">
    <property type="entry name" value="Argininosuccinate lyase"/>
    <property type="match status" value="1"/>
</dbReference>
<dbReference type="FunFam" id="1.20.200.10:FF:000015">
    <property type="entry name" value="argininosuccinate lyase isoform X2"/>
    <property type="match status" value="1"/>
</dbReference>
<dbReference type="Gene3D" id="1.10.40.30">
    <property type="entry name" value="Fumarase/aspartase (C-terminal domain)"/>
    <property type="match status" value="1"/>
</dbReference>
<dbReference type="Gene3D" id="1.20.200.10">
    <property type="entry name" value="Fumarase/aspartase (Central domain)"/>
    <property type="match status" value="1"/>
</dbReference>
<dbReference type="Gene3D" id="1.10.275.10">
    <property type="entry name" value="Fumarase/aspartase (N-terminal domain)"/>
    <property type="match status" value="1"/>
</dbReference>
<dbReference type="HAMAP" id="MF_00006">
    <property type="entry name" value="Arg_succ_lyase"/>
    <property type="match status" value="1"/>
</dbReference>
<dbReference type="InterPro" id="IPR029419">
    <property type="entry name" value="Arg_succ_lyase_C"/>
</dbReference>
<dbReference type="InterPro" id="IPR009049">
    <property type="entry name" value="Argininosuccinate_lyase"/>
</dbReference>
<dbReference type="InterPro" id="IPR024083">
    <property type="entry name" value="Fumarase/histidase_N"/>
</dbReference>
<dbReference type="InterPro" id="IPR020557">
    <property type="entry name" value="Fumarate_lyase_CS"/>
</dbReference>
<dbReference type="InterPro" id="IPR000362">
    <property type="entry name" value="Fumarate_lyase_fam"/>
</dbReference>
<dbReference type="InterPro" id="IPR022761">
    <property type="entry name" value="Fumarate_lyase_N"/>
</dbReference>
<dbReference type="InterPro" id="IPR008948">
    <property type="entry name" value="L-Aspartase-like"/>
</dbReference>
<dbReference type="NCBIfam" id="TIGR00838">
    <property type="entry name" value="argH"/>
    <property type="match status" value="1"/>
</dbReference>
<dbReference type="PANTHER" id="PTHR43814">
    <property type="entry name" value="ARGININOSUCCINATE LYASE"/>
    <property type="match status" value="1"/>
</dbReference>
<dbReference type="PANTHER" id="PTHR43814:SF1">
    <property type="entry name" value="ARGININOSUCCINATE LYASE"/>
    <property type="match status" value="1"/>
</dbReference>
<dbReference type="Pfam" id="PF14698">
    <property type="entry name" value="ASL_C2"/>
    <property type="match status" value="1"/>
</dbReference>
<dbReference type="Pfam" id="PF00206">
    <property type="entry name" value="Lyase_1"/>
    <property type="match status" value="1"/>
</dbReference>
<dbReference type="PRINTS" id="PR00145">
    <property type="entry name" value="ARGSUCLYASE"/>
</dbReference>
<dbReference type="PRINTS" id="PR00149">
    <property type="entry name" value="FUMRATELYASE"/>
</dbReference>
<dbReference type="SUPFAM" id="SSF48557">
    <property type="entry name" value="L-aspartase-like"/>
    <property type="match status" value="1"/>
</dbReference>
<dbReference type="PROSITE" id="PS00163">
    <property type="entry name" value="FUMARATE_LYASES"/>
    <property type="match status" value="1"/>
</dbReference>
<organism>
    <name type="scientific">Campylobacter concisus (strain 13826)</name>
    <dbReference type="NCBI Taxonomy" id="360104"/>
    <lineage>
        <taxon>Bacteria</taxon>
        <taxon>Pseudomonadati</taxon>
        <taxon>Campylobacterota</taxon>
        <taxon>Epsilonproteobacteria</taxon>
        <taxon>Campylobacterales</taxon>
        <taxon>Campylobacteraceae</taxon>
        <taxon>Campylobacter</taxon>
    </lineage>
</organism>